<keyword id="KW-0687">Ribonucleoprotein</keyword>
<keyword id="KW-0689">Ribosomal protein</keyword>
<name>RL7_BRUSU</name>
<sequence length="124" mass="12546">MADLAKIVEDLSALTVLEAAELSKLLEEKWGVSAAAPVAVAAAGGAAPAAAAEEKTEFDVVLADGGANKINVIKEVRALTGLGLKEAKDLVEGAPKAVKEGASKDEAEKIKAQLEAAGAKVELK</sequence>
<accession>P0A469</accession>
<accession>G0KAG6</accession>
<accession>P41106</accession>
<accession>Q9R2F1</accession>
<proteinExistence type="inferred from homology"/>
<organism>
    <name type="scientific">Brucella suis biovar 1 (strain 1330)</name>
    <dbReference type="NCBI Taxonomy" id="204722"/>
    <lineage>
        <taxon>Bacteria</taxon>
        <taxon>Pseudomonadati</taxon>
        <taxon>Pseudomonadota</taxon>
        <taxon>Alphaproteobacteria</taxon>
        <taxon>Hyphomicrobiales</taxon>
        <taxon>Brucellaceae</taxon>
        <taxon>Brucella/Ochrobactrum group</taxon>
        <taxon>Brucella</taxon>
    </lineage>
</organism>
<comment type="function">
    <text evidence="1">Forms part of the ribosomal stalk which helps the ribosome interact with GTP-bound translation factors. Is thus essential for accurate translation.</text>
</comment>
<comment type="subunit">
    <text evidence="1">Homodimer. Part of the ribosomal stalk of the 50S ribosomal subunit. Forms a multimeric L10(L12)X complex, where L10 forms an elongated spine to which 2 to 4 L12 dimers bind in a sequential fashion. Binds GTP-bound translation factors.</text>
</comment>
<comment type="similarity">
    <text evidence="1">Belongs to the bacterial ribosomal protein bL12 family.</text>
</comment>
<feature type="chain" id="PRO_0000157509" description="Large ribosomal subunit protein bL12">
    <location>
        <begin position="1"/>
        <end position="124"/>
    </location>
</feature>
<reference key="1">
    <citation type="journal article" date="2002" name="Proc. Natl. Acad. Sci. U.S.A.">
        <title>The Brucella suis genome reveals fundamental similarities between animal and plant pathogens and symbionts.</title>
        <authorList>
            <person name="Paulsen I.T."/>
            <person name="Seshadri R."/>
            <person name="Nelson K.E."/>
            <person name="Eisen J.A."/>
            <person name="Heidelberg J.F."/>
            <person name="Read T.D."/>
            <person name="Dodson R.J."/>
            <person name="Umayam L.A."/>
            <person name="Brinkac L.M."/>
            <person name="Beanan M.J."/>
            <person name="Daugherty S.C."/>
            <person name="DeBoy R.T."/>
            <person name="Durkin A.S."/>
            <person name="Kolonay J.F."/>
            <person name="Madupu R."/>
            <person name="Nelson W.C."/>
            <person name="Ayodeji B."/>
            <person name="Kraul M."/>
            <person name="Shetty J."/>
            <person name="Malek J.A."/>
            <person name="Van Aken S.E."/>
            <person name="Riedmuller S."/>
            <person name="Tettelin H."/>
            <person name="Gill S.R."/>
            <person name="White O."/>
            <person name="Salzberg S.L."/>
            <person name="Hoover D.L."/>
            <person name="Lindler L.E."/>
            <person name="Halling S.M."/>
            <person name="Boyle S.M."/>
            <person name="Fraser C.M."/>
        </authorList>
    </citation>
    <scope>NUCLEOTIDE SEQUENCE [LARGE SCALE GENOMIC DNA]</scope>
    <source>
        <strain>1330</strain>
    </source>
</reference>
<reference key="2">
    <citation type="journal article" date="2011" name="J. Bacteriol.">
        <title>Revised genome sequence of Brucella suis 1330.</title>
        <authorList>
            <person name="Tae H."/>
            <person name="Shallom S."/>
            <person name="Settlage R."/>
            <person name="Preston D."/>
            <person name="Adams L.G."/>
            <person name="Garner H.R."/>
        </authorList>
    </citation>
    <scope>NUCLEOTIDE SEQUENCE [LARGE SCALE GENOMIC DNA]</scope>
    <source>
        <strain>1330</strain>
    </source>
</reference>
<evidence type="ECO:0000255" key="1">
    <source>
        <dbReference type="HAMAP-Rule" id="MF_00368"/>
    </source>
</evidence>
<evidence type="ECO:0000305" key="2"/>
<gene>
    <name evidence="1" type="primary">rplL</name>
    <name type="ordered locus">BR1245</name>
    <name type="ordered locus">BS1330_I1241</name>
</gene>
<dbReference type="EMBL" id="AE014291">
    <property type="protein sequence ID" value="AAN30164.1"/>
    <property type="molecule type" value="Genomic_DNA"/>
</dbReference>
<dbReference type="EMBL" id="CP002997">
    <property type="protein sequence ID" value="AEM18582.1"/>
    <property type="molecule type" value="Genomic_DNA"/>
</dbReference>
<dbReference type="RefSeq" id="WP_002964371.1">
    <property type="nucleotide sequence ID" value="NZ_KN046804.1"/>
</dbReference>
<dbReference type="SMR" id="P0A469"/>
<dbReference type="GeneID" id="97533516"/>
<dbReference type="KEGG" id="bms:BR1245"/>
<dbReference type="KEGG" id="bsi:BS1330_I1241"/>
<dbReference type="PATRIC" id="fig|204722.21.peg.3400"/>
<dbReference type="HOGENOM" id="CLU_086499_3_0_5"/>
<dbReference type="PhylomeDB" id="P0A469"/>
<dbReference type="Proteomes" id="UP000007104">
    <property type="component" value="Chromosome I"/>
</dbReference>
<dbReference type="GO" id="GO:0022625">
    <property type="term" value="C:cytosolic large ribosomal subunit"/>
    <property type="evidence" value="ECO:0007669"/>
    <property type="project" value="TreeGrafter"/>
</dbReference>
<dbReference type="GO" id="GO:0003729">
    <property type="term" value="F:mRNA binding"/>
    <property type="evidence" value="ECO:0007669"/>
    <property type="project" value="TreeGrafter"/>
</dbReference>
<dbReference type="GO" id="GO:0003735">
    <property type="term" value="F:structural constituent of ribosome"/>
    <property type="evidence" value="ECO:0007669"/>
    <property type="project" value="InterPro"/>
</dbReference>
<dbReference type="GO" id="GO:0006412">
    <property type="term" value="P:translation"/>
    <property type="evidence" value="ECO:0007669"/>
    <property type="project" value="UniProtKB-UniRule"/>
</dbReference>
<dbReference type="CDD" id="cd00387">
    <property type="entry name" value="Ribosomal_L7_L12"/>
    <property type="match status" value="1"/>
</dbReference>
<dbReference type="FunFam" id="3.30.1390.10:FF:000001">
    <property type="entry name" value="50S ribosomal protein L7/L12"/>
    <property type="match status" value="1"/>
</dbReference>
<dbReference type="Gene3D" id="3.30.1390.10">
    <property type="match status" value="1"/>
</dbReference>
<dbReference type="Gene3D" id="1.20.5.710">
    <property type="entry name" value="Single helix bin"/>
    <property type="match status" value="1"/>
</dbReference>
<dbReference type="HAMAP" id="MF_00368">
    <property type="entry name" value="Ribosomal_bL12"/>
    <property type="match status" value="1"/>
</dbReference>
<dbReference type="InterPro" id="IPR000206">
    <property type="entry name" value="Ribosomal_bL12"/>
</dbReference>
<dbReference type="InterPro" id="IPR013823">
    <property type="entry name" value="Ribosomal_bL12_C"/>
</dbReference>
<dbReference type="InterPro" id="IPR014719">
    <property type="entry name" value="Ribosomal_bL12_C/ClpS-like"/>
</dbReference>
<dbReference type="InterPro" id="IPR008932">
    <property type="entry name" value="Ribosomal_bL12_oligo"/>
</dbReference>
<dbReference type="InterPro" id="IPR036235">
    <property type="entry name" value="Ribosomal_bL12_oligo_N_sf"/>
</dbReference>
<dbReference type="NCBIfam" id="TIGR00855">
    <property type="entry name" value="L12"/>
    <property type="match status" value="1"/>
</dbReference>
<dbReference type="PANTHER" id="PTHR45987">
    <property type="entry name" value="39S RIBOSOMAL PROTEIN L12"/>
    <property type="match status" value="1"/>
</dbReference>
<dbReference type="PANTHER" id="PTHR45987:SF4">
    <property type="entry name" value="LARGE RIBOSOMAL SUBUNIT PROTEIN BL12M"/>
    <property type="match status" value="1"/>
</dbReference>
<dbReference type="Pfam" id="PF00542">
    <property type="entry name" value="Ribosomal_L12"/>
    <property type="match status" value="1"/>
</dbReference>
<dbReference type="Pfam" id="PF16320">
    <property type="entry name" value="Ribosomal_L12_N"/>
    <property type="match status" value="1"/>
</dbReference>
<dbReference type="SUPFAM" id="SSF54736">
    <property type="entry name" value="ClpS-like"/>
    <property type="match status" value="1"/>
</dbReference>
<dbReference type="SUPFAM" id="SSF48300">
    <property type="entry name" value="Ribosomal protein L7/12, oligomerisation (N-terminal) domain"/>
    <property type="match status" value="1"/>
</dbReference>
<protein>
    <recommendedName>
        <fullName evidence="1">Large ribosomal subunit protein bL12</fullName>
    </recommendedName>
    <alternativeName>
        <fullName evidence="2">50S ribosomal protein L7/L12</fullName>
    </alternativeName>
</protein>